<keyword id="KW-0066">ATP synthesis</keyword>
<keyword id="KW-1003">Cell membrane</keyword>
<keyword id="KW-0139">CF(1)</keyword>
<keyword id="KW-0375">Hydrogen ion transport</keyword>
<keyword id="KW-0406">Ion transport</keyword>
<keyword id="KW-0472">Membrane</keyword>
<keyword id="KW-0813">Transport</keyword>
<accession>A7Z9Q3</accession>
<proteinExistence type="inferred from homology"/>
<feature type="chain" id="PRO_0000370885" description="ATP synthase subunit delta">
    <location>
        <begin position="1"/>
        <end position="181"/>
    </location>
</feature>
<dbReference type="EMBL" id="CP000560">
    <property type="protein sequence ID" value="ABS75729.1"/>
    <property type="molecule type" value="Genomic_DNA"/>
</dbReference>
<dbReference type="RefSeq" id="WP_003151169.1">
    <property type="nucleotide sequence ID" value="NC_009725.2"/>
</dbReference>
<dbReference type="SMR" id="A7Z9Q3"/>
<dbReference type="GeneID" id="93082544"/>
<dbReference type="KEGG" id="bay:RBAM_034000"/>
<dbReference type="HOGENOM" id="CLU_085114_4_1_9"/>
<dbReference type="Proteomes" id="UP000001120">
    <property type="component" value="Chromosome"/>
</dbReference>
<dbReference type="GO" id="GO:0005886">
    <property type="term" value="C:plasma membrane"/>
    <property type="evidence" value="ECO:0007669"/>
    <property type="project" value="UniProtKB-SubCell"/>
</dbReference>
<dbReference type="GO" id="GO:0045259">
    <property type="term" value="C:proton-transporting ATP synthase complex"/>
    <property type="evidence" value="ECO:0007669"/>
    <property type="project" value="UniProtKB-KW"/>
</dbReference>
<dbReference type="GO" id="GO:0046933">
    <property type="term" value="F:proton-transporting ATP synthase activity, rotational mechanism"/>
    <property type="evidence" value="ECO:0007669"/>
    <property type="project" value="UniProtKB-UniRule"/>
</dbReference>
<dbReference type="Gene3D" id="1.10.520.20">
    <property type="entry name" value="N-terminal domain of the delta subunit of the F1F0-ATP synthase"/>
    <property type="match status" value="1"/>
</dbReference>
<dbReference type="HAMAP" id="MF_01416">
    <property type="entry name" value="ATP_synth_delta_bact"/>
    <property type="match status" value="1"/>
</dbReference>
<dbReference type="InterPro" id="IPR026015">
    <property type="entry name" value="ATP_synth_OSCP/delta_N_sf"/>
</dbReference>
<dbReference type="InterPro" id="IPR020781">
    <property type="entry name" value="ATPase_OSCP/d_CS"/>
</dbReference>
<dbReference type="InterPro" id="IPR000711">
    <property type="entry name" value="ATPase_OSCP/dsu"/>
</dbReference>
<dbReference type="NCBIfam" id="TIGR01145">
    <property type="entry name" value="ATP_synt_delta"/>
    <property type="match status" value="1"/>
</dbReference>
<dbReference type="NCBIfam" id="NF004403">
    <property type="entry name" value="PRK05758.2-4"/>
    <property type="match status" value="1"/>
</dbReference>
<dbReference type="PANTHER" id="PTHR11910">
    <property type="entry name" value="ATP SYNTHASE DELTA CHAIN"/>
    <property type="match status" value="1"/>
</dbReference>
<dbReference type="Pfam" id="PF00213">
    <property type="entry name" value="OSCP"/>
    <property type="match status" value="1"/>
</dbReference>
<dbReference type="PRINTS" id="PR00125">
    <property type="entry name" value="ATPASEDELTA"/>
</dbReference>
<dbReference type="SUPFAM" id="SSF47928">
    <property type="entry name" value="N-terminal domain of the delta subunit of the F1F0-ATP synthase"/>
    <property type="match status" value="1"/>
</dbReference>
<dbReference type="PROSITE" id="PS00389">
    <property type="entry name" value="ATPASE_DELTA"/>
    <property type="match status" value="1"/>
</dbReference>
<evidence type="ECO:0000255" key="1">
    <source>
        <dbReference type="HAMAP-Rule" id="MF_01416"/>
    </source>
</evidence>
<reference key="1">
    <citation type="journal article" date="2007" name="Nat. Biotechnol.">
        <title>Comparative analysis of the complete genome sequence of the plant growth-promoting bacterium Bacillus amyloliquefaciens FZB42.</title>
        <authorList>
            <person name="Chen X.H."/>
            <person name="Koumoutsi A."/>
            <person name="Scholz R."/>
            <person name="Eisenreich A."/>
            <person name="Schneider K."/>
            <person name="Heinemeyer I."/>
            <person name="Morgenstern B."/>
            <person name="Voss B."/>
            <person name="Hess W.R."/>
            <person name="Reva O."/>
            <person name="Junge H."/>
            <person name="Voigt B."/>
            <person name="Jungblut P.R."/>
            <person name="Vater J."/>
            <person name="Suessmuth R."/>
            <person name="Liesegang H."/>
            <person name="Strittmatter A."/>
            <person name="Gottschalk G."/>
            <person name="Borriss R."/>
        </authorList>
    </citation>
    <scope>NUCLEOTIDE SEQUENCE [LARGE SCALE GENOMIC DNA]</scope>
    <source>
        <strain>DSM 23117 / BGSC 10A6 / LMG 26770 / FZB42</strain>
    </source>
</reference>
<protein>
    <recommendedName>
        <fullName evidence="1">ATP synthase subunit delta</fullName>
    </recommendedName>
    <alternativeName>
        <fullName evidence="1">ATP synthase F(1) sector subunit delta</fullName>
    </alternativeName>
    <alternativeName>
        <fullName evidence="1">F-type ATPase subunit delta</fullName>
        <shortName evidence="1">F-ATPase subunit delta</shortName>
    </alternativeName>
</protein>
<comment type="function">
    <text evidence="1">F(1)F(0) ATP synthase produces ATP from ADP in the presence of a proton or sodium gradient. F-type ATPases consist of two structural domains, F(1) containing the extramembraneous catalytic core and F(0) containing the membrane proton channel, linked together by a central stalk and a peripheral stalk. During catalysis, ATP synthesis in the catalytic domain of F(1) is coupled via a rotary mechanism of the central stalk subunits to proton translocation.</text>
</comment>
<comment type="function">
    <text evidence="1">This protein is part of the stalk that links CF(0) to CF(1). It either transmits conformational changes from CF(0) to CF(1) or is implicated in proton conduction.</text>
</comment>
<comment type="subunit">
    <text evidence="1">F-type ATPases have 2 components, F(1) - the catalytic core - and F(0) - the membrane proton channel. F(1) has five subunits: alpha(3), beta(3), gamma(1), delta(1), epsilon(1). F(0) has three main subunits: a(1), b(2) and c(10-14). The alpha and beta chains form an alternating ring which encloses part of the gamma chain. F(1) is attached to F(0) by a central stalk formed by the gamma and epsilon chains, while a peripheral stalk is formed by the delta and b chains.</text>
</comment>
<comment type="subcellular location">
    <subcellularLocation>
        <location evidence="1">Cell membrane</location>
        <topology evidence="1">Peripheral membrane protein</topology>
    </subcellularLocation>
</comment>
<comment type="similarity">
    <text evidence="1">Belongs to the ATPase delta chain family.</text>
</comment>
<sequence>MSGSAVSKRYASALFDIAVETSQINEIEEELTVLKEVFRNEAGLQEVLSHPKVSAAKKKELIQQSFGALSESVLHTIFLLIDRRRSSIVPDLTDEFIKLANQARQTEDAVVYSVKPLSEAEMLSLSQVFAKKAGIASLRIRNEVQTDLIGGIKVRIGNRIYDGSVSGKLERMERQLAGGNR</sequence>
<gene>
    <name evidence="1" type="primary">atpH</name>
    <name type="ordered locus">RBAM_034000</name>
</gene>
<name>ATPD_BACVZ</name>
<organism>
    <name type="scientific">Bacillus velezensis (strain DSM 23117 / BGSC 10A6 / LMG 26770 / FZB42)</name>
    <name type="common">Bacillus amyloliquefaciens subsp. plantarum</name>
    <dbReference type="NCBI Taxonomy" id="326423"/>
    <lineage>
        <taxon>Bacteria</taxon>
        <taxon>Bacillati</taxon>
        <taxon>Bacillota</taxon>
        <taxon>Bacilli</taxon>
        <taxon>Bacillales</taxon>
        <taxon>Bacillaceae</taxon>
        <taxon>Bacillus</taxon>
        <taxon>Bacillus amyloliquefaciens group</taxon>
    </lineage>
</organism>